<protein>
    <recommendedName>
        <fullName evidence="1">Small ribosomal subunit protein uS7</fullName>
    </recommendedName>
    <alternativeName>
        <fullName evidence="2">30S ribosomal protein S7</fullName>
    </alternativeName>
</protein>
<name>RS7_ELUMP</name>
<organism>
    <name type="scientific">Elusimicrobium minutum (strain Pei191)</name>
    <dbReference type="NCBI Taxonomy" id="445932"/>
    <lineage>
        <taxon>Bacteria</taxon>
        <taxon>Pseudomonadati</taxon>
        <taxon>Elusimicrobiota</taxon>
        <taxon>Elusimicrobia</taxon>
        <taxon>Elusimicrobiales</taxon>
        <taxon>Elusimicrobiaceae</taxon>
        <taxon>Elusimicrobium</taxon>
    </lineage>
</organism>
<evidence type="ECO:0000255" key="1">
    <source>
        <dbReference type="HAMAP-Rule" id="MF_00480"/>
    </source>
</evidence>
<evidence type="ECO:0000305" key="2"/>
<gene>
    <name evidence="1" type="primary">rpsG</name>
    <name type="ordered locus">Emin_1425</name>
</gene>
<keyword id="KW-1185">Reference proteome</keyword>
<keyword id="KW-0687">Ribonucleoprotein</keyword>
<keyword id="KW-0689">Ribosomal protein</keyword>
<keyword id="KW-0694">RNA-binding</keyword>
<keyword id="KW-0699">rRNA-binding</keyword>
<keyword id="KW-0820">tRNA-binding</keyword>
<feature type="chain" id="PRO_1000125944" description="Small ribosomal subunit protein uS7">
    <location>
        <begin position="1"/>
        <end position="159"/>
    </location>
</feature>
<comment type="function">
    <text evidence="1">One of the primary rRNA binding proteins, it binds directly to 16S rRNA where it nucleates assembly of the head domain of the 30S subunit. Is located at the subunit interface close to the decoding center, probably blocks exit of the E-site tRNA.</text>
</comment>
<comment type="subunit">
    <text evidence="1">Part of the 30S ribosomal subunit. Contacts proteins S9 and S11.</text>
</comment>
<comment type="similarity">
    <text evidence="1">Belongs to the universal ribosomal protein uS7 family.</text>
</comment>
<proteinExistence type="inferred from homology"/>
<dbReference type="EMBL" id="CP001055">
    <property type="protein sequence ID" value="ACC98974.1"/>
    <property type="molecule type" value="Genomic_DNA"/>
</dbReference>
<dbReference type="RefSeq" id="WP_012415589.1">
    <property type="nucleotide sequence ID" value="NC_010644.1"/>
</dbReference>
<dbReference type="SMR" id="B2KEM8"/>
<dbReference type="STRING" id="445932.Emin_1425"/>
<dbReference type="KEGG" id="emi:Emin_1425"/>
<dbReference type="HOGENOM" id="CLU_072226_1_1_0"/>
<dbReference type="OrthoDB" id="9807653at2"/>
<dbReference type="Proteomes" id="UP000001029">
    <property type="component" value="Chromosome"/>
</dbReference>
<dbReference type="GO" id="GO:0015935">
    <property type="term" value="C:small ribosomal subunit"/>
    <property type="evidence" value="ECO:0007669"/>
    <property type="project" value="InterPro"/>
</dbReference>
<dbReference type="GO" id="GO:0019843">
    <property type="term" value="F:rRNA binding"/>
    <property type="evidence" value="ECO:0007669"/>
    <property type="project" value="UniProtKB-UniRule"/>
</dbReference>
<dbReference type="GO" id="GO:0003735">
    <property type="term" value="F:structural constituent of ribosome"/>
    <property type="evidence" value="ECO:0007669"/>
    <property type="project" value="InterPro"/>
</dbReference>
<dbReference type="GO" id="GO:0000049">
    <property type="term" value="F:tRNA binding"/>
    <property type="evidence" value="ECO:0007669"/>
    <property type="project" value="UniProtKB-UniRule"/>
</dbReference>
<dbReference type="GO" id="GO:0006412">
    <property type="term" value="P:translation"/>
    <property type="evidence" value="ECO:0007669"/>
    <property type="project" value="UniProtKB-UniRule"/>
</dbReference>
<dbReference type="CDD" id="cd14869">
    <property type="entry name" value="uS7_Bacteria"/>
    <property type="match status" value="1"/>
</dbReference>
<dbReference type="FunFam" id="1.10.455.10:FF:000001">
    <property type="entry name" value="30S ribosomal protein S7"/>
    <property type="match status" value="1"/>
</dbReference>
<dbReference type="Gene3D" id="1.10.455.10">
    <property type="entry name" value="Ribosomal protein S7 domain"/>
    <property type="match status" value="1"/>
</dbReference>
<dbReference type="HAMAP" id="MF_00480_B">
    <property type="entry name" value="Ribosomal_uS7_B"/>
    <property type="match status" value="1"/>
</dbReference>
<dbReference type="InterPro" id="IPR000235">
    <property type="entry name" value="Ribosomal_uS7"/>
</dbReference>
<dbReference type="InterPro" id="IPR005717">
    <property type="entry name" value="Ribosomal_uS7_bac/org-type"/>
</dbReference>
<dbReference type="InterPro" id="IPR020606">
    <property type="entry name" value="Ribosomal_uS7_CS"/>
</dbReference>
<dbReference type="InterPro" id="IPR023798">
    <property type="entry name" value="Ribosomal_uS7_dom"/>
</dbReference>
<dbReference type="InterPro" id="IPR036823">
    <property type="entry name" value="Ribosomal_uS7_dom_sf"/>
</dbReference>
<dbReference type="NCBIfam" id="TIGR01029">
    <property type="entry name" value="rpsG_bact"/>
    <property type="match status" value="1"/>
</dbReference>
<dbReference type="PANTHER" id="PTHR11205">
    <property type="entry name" value="RIBOSOMAL PROTEIN S7"/>
    <property type="match status" value="1"/>
</dbReference>
<dbReference type="Pfam" id="PF00177">
    <property type="entry name" value="Ribosomal_S7"/>
    <property type="match status" value="1"/>
</dbReference>
<dbReference type="PIRSF" id="PIRSF002122">
    <property type="entry name" value="RPS7p_RPS7a_RPS5e_RPS7o"/>
    <property type="match status" value="1"/>
</dbReference>
<dbReference type="SUPFAM" id="SSF47973">
    <property type="entry name" value="Ribosomal protein S7"/>
    <property type="match status" value="1"/>
</dbReference>
<dbReference type="PROSITE" id="PS00052">
    <property type="entry name" value="RIBOSOMAL_S7"/>
    <property type="match status" value="1"/>
</dbReference>
<reference key="1">
    <citation type="journal article" date="2009" name="Appl. Environ. Microbiol.">
        <title>Genomic analysis of 'Elusimicrobium minutum,' the first cultivated representative of the phylum 'Elusimicrobia' (formerly termite group 1).</title>
        <authorList>
            <person name="Herlemann D.P.R."/>
            <person name="Geissinger O."/>
            <person name="Ikeda-Ohtsubo W."/>
            <person name="Kunin V."/>
            <person name="Sun H."/>
            <person name="Lapidus A."/>
            <person name="Hugenholtz P."/>
            <person name="Brune A."/>
        </authorList>
    </citation>
    <scope>NUCLEOTIDE SEQUENCE [LARGE SCALE GENOMIC DNA]</scope>
    <source>
        <strain>Pei191</strain>
    </source>
</reference>
<sequence length="159" mass="18091">MPRKGLRPRDRRALPEADYKYDSVLVARFVNKINFEGKKATAEKIVADSMVIIADKTKEDAMTVFNRCIETVRPLLELKARRVGGATYQVPVEVKPLRSTSLAMCWLLDAARSRKGRPMAEKLAEEIILGSKKEGAAFKKREDTHRMAEANRAFAHFKW</sequence>
<accession>B2KEM8</accession>